<organism>
    <name type="scientific">Bovine coronavirus (strain OK-0514)</name>
    <name type="common">BCoV</name>
    <name type="synonym">BCV</name>
    <dbReference type="NCBI Taxonomy" id="231432"/>
    <lineage>
        <taxon>Viruses</taxon>
        <taxon>Riboviria</taxon>
        <taxon>Orthornavirae</taxon>
        <taxon>Pisuviricota</taxon>
        <taxon>Pisoniviricetes</taxon>
        <taxon>Nidovirales</taxon>
        <taxon>Cornidovirineae</taxon>
        <taxon>Coronaviridae</taxon>
        <taxon>Orthocoronavirinae</taxon>
        <taxon>Betacoronavirus</taxon>
        <taxon>Embecovirus</taxon>
        <taxon>Betacoronavirus 1</taxon>
    </lineage>
</organism>
<dbReference type="EMBL" id="AF058944">
    <property type="protein sequence ID" value="AAF25517.1"/>
    <property type="molecule type" value="Genomic_RNA"/>
</dbReference>
<dbReference type="SMR" id="P0C2R4"/>
<dbReference type="Gene3D" id="3.90.1140.10">
    <property type="entry name" value="Cyclic phosphodiesterase"/>
    <property type="match status" value="1"/>
</dbReference>
<dbReference type="InterPro" id="IPR007878">
    <property type="entry name" value="Coronavirus_NS2A"/>
</dbReference>
<dbReference type="InterPro" id="IPR039573">
    <property type="entry name" value="NS2A-like"/>
</dbReference>
<dbReference type="Pfam" id="PF05213">
    <property type="entry name" value="Corona_NS2A"/>
    <property type="match status" value="1"/>
</dbReference>
<dbReference type="PIRSF" id="PIRSF003890">
    <property type="entry name" value="LigT_coronavirus"/>
    <property type="match status" value="1"/>
</dbReference>
<gene>
    <name type="ORF">2a</name>
</gene>
<proteinExistence type="inferred from homology"/>
<reference key="1">
    <citation type="journal article" date="1998" name="Virus Genes">
        <title>Nucleotide and predicted amino acid sequences of all genes encoded by the 3' genomic portion (9.5 kb) of respiratory bovine coronaviruses and comparisons among respiratory and enteric coronaviruses.</title>
        <authorList>
            <person name="Chouljenko V.N."/>
            <person name="Kousoulas K.G."/>
            <person name="Lin X.Q."/>
            <person name="Storz J."/>
        </authorList>
    </citation>
    <scope>NUCLEOTIDE SEQUENCE [GENOMIC RNA]</scope>
    <source>
        <strain>Isolate OK-0514-3</strain>
    </source>
</reference>
<protein>
    <recommendedName>
        <fullName>Non-structural protein 2a</fullName>
        <shortName>ns2a</shortName>
    </recommendedName>
    <alternativeName>
        <fullName>32 kDa accessory protein</fullName>
    </alternativeName>
    <alternativeName>
        <fullName>32 kDa non-structural protein</fullName>
    </alternativeName>
    <alternativeName>
        <fullName>ns2</fullName>
    </alternativeName>
</protein>
<accession>P0C2R4</accession>
<accession>Q9PX17</accession>
<name>NS2A_CVBOK</name>
<organismHost>
    <name type="scientific">Bos taurus</name>
    <name type="common">Bovine</name>
    <dbReference type="NCBI Taxonomy" id="9913"/>
</organismHost>
<evidence type="ECO:0000305" key="1"/>
<sequence>MAVAYADKPNHFINFPLTQFQGFVLNYKGLQFQLLDEGVDCKIQTAPHISLAMLDIQPEDYRSVDVAIQEVIDDMHWGEGFQIKFENPHILGRCIVLDVKGVEELHDDLVNYIRDKGCVADQSRKWIGHCTIAQLTDAALSIKENVDFINSMQFNYKITINPSSPARLEIVKLGAEKKDGFYETIASHWMGIRFEYNPPTDKLAMIMGYCCSEVVRKELEEGDLPENDDDAWFKLSYHYENNSWFFRHVYRKSSYFRKSCQNLDCNCLGFYESSVEED</sequence>
<feature type="chain" id="PRO_0000283937" description="Non-structural protein 2a">
    <location>
        <begin position="1"/>
        <end position="278"/>
    </location>
</feature>
<comment type="similarity">
    <text evidence="1">Belongs to the coronaviruses ns2a protein family.</text>
</comment>